<reference key="1">
    <citation type="journal article" date="2003" name="Science">
        <title>Role of mobile DNA in the evolution of vancomycin-resistant Enterococcus faecalis.</title>
        <authorList>
            <person name="Paulsen I.T."/>
            <person name="Banerjei L."/>
            <person name="Myers G.S.A."/>
            <person name="Nelson K.E."/>
            <person name="Seshadri R."/>
            <person name="Read T.D."/>
            <person name="Fouts D.E."/>
            <person name="Eisen J.A."/>
            <person name="Gill S.R."/>
            <person name="Heidelberg J.F."/>
            <person name="Tettelin H."/>
            <person name="Dodson R.J."/>
            <person name="Umayam L.A."/>
            <person name="Brinkac L.M."/>
            <person name="Beanan M.J."/>
            <person name="Daugherty S.C."/>
            <person name="DeBoy R.T."/>
            <person name="Durkin S.A."/>
            <person name="Kolonay J.F."/>
            <person name="Madupu R."/>
            <person name="Nelson W.C."/>
            <person name="Vamathevan J.J."/>
            <person name="Tran B."/>
            <person name="Upton J."/>
            <person name="Hansen T."/>
            <person name="Shetty J."/>
            <person name="Khouri H.M."/>
            <person name="Utterback T.R."/>
            <person name="Radune D."/>
            <person name="Ketchum K.A."/>
            <person name="Dougherty B.A."/>
            <person name="Fraser C.M."/>
        </authorList>
    </citation>
    <scope>NUCLEOTIDE SEQUENCE [LARGE SCALE GENOMIC DNA]</scope>
    <source>
        <strain>ATCC 700802 / V583</strain>
    </source>
</reference>
<organism>
    <name type="scientific">Enterococcus faecalis (strain ATCC 700802 / V583)</name>
    <dbReference type="NCBI Taxonomy" id="226185"/>
    <lineage>
        <taxon>Bacteria</taxon>
        <taxon>Bacillati</taxon>
        <taxon>Bacillota</taxon>
        <taxon>Bacilli</taxon>
        <taxon>Lactobacillales</taxon>
        <taxon>Enterococcaceae</taxon>
        <taxon>Enterococcus</taxon>
    </lineage>
</organism>
<comment type="similarity">
    <text evidence="2">Belongs to the bacterial ribosomal protein bL33 family.</text>
</comment>
<keyword id="KW-1185">Reference proteome</keyword>
<keyword id="KW-0687">Ribonucleoprotein</keyword>
<keyword id="KW-0689">Ribosomal protein</keyword>
<evidence type="ECO:0000255" key="1">
    <source>
        <dbReference type="HAMAP-Rule" id="MF_00294"/>
    </source>
</evidence>
<evidence type="ECO:0000305" key="2"/>
<name>RL334_ENTFA</name>
<proteinExistence type="inferred from homology"/>
<accession>P59629</accession>
<sequence>MRQTITLACAETGERLYLTSKNKRNTPEKLQLKKYSPKLRRRALFTEVK</sequence>
<feature type="chain" id="PRO_0000170164" description="Large ribosomal subunit protein bL33D">
    <location>
        <begin position="1"/>
        <end position="49"/>
    </location>
</feature>
<gene>
    <name type="primary">rpmG4</name>
    <name type="synonym">rpmG-4</name>
    <name type="ordered locus">EF_3203</name>
</gene>
<dbReference type="EMBL" id="AE016830">
    <property type="protein sequence ID" value="AAO82875.1"/>
    <property type="molecule type" value="Genomic_DNA"/>
</dbReference>
<dbReference type="RefSeq" id="NP_816805.1">
    <property type="nucleotide sequence ID" value="NC_004668.1"/>
</dbReference>
<dbReference type="SMR" id="P59629"/>
<dbReference type="STRING" id="226185.EF_3203"/>
<dbReference type="EnsemblBacteria" id="AAO82875">
    <property type="protein sequence ID" value="AAO82875"/>
    <property type="gene ID" value="EF_3203"/>
</dbReference>
<dbReference type="KEGG" id="efa:EF3203"/>
<dbReference type="PATRIC" id="fig|226185.45.peg.377"/>
<dbReference type="eggNOG" id="COG0267">
    <property type="taxonomic scope" value="Bacteria"/>
</dbReference>
<dbReference type="HOGENOM" id="CLU_190949_3_2_9"/>
<dbReference type="Proteomes" id="UP000001415">
    <property type="component" value="Chromosome"/>
</dbReference>
<dbReference type="GO" id="GO:0005737">
    <property type="term" value="C:cytoplasm"/>
    <property type="evidence" value="ECO:0007669"/>
    <property type="project" value="UniProtKB-ARBA"/>
</dbReference>
<dbReference type="GO" id="GO:1990904">
    <property type="term" value="C:ribonucleoprotein complex"/>
    <property type="evidence" value="ECO:0007669"/>
    <property type="project" value="UniProtKB-KW"/>
</dbReference>
<dbReference type="GO" id="GO:0005840">
    <property type="term" value="C:ribosome"/>
    <property type="evidence" value="ECO:0007669"/>
    <property type="project" value="UniProtKB-KW"/>
</dbReference>
<dbReference type="GO" id="GO:0003735">
    <property type="term" value="F:structural constituent of ribosome"/>
    <property type="evidence" value="ECO:0007669"/>
    <property type="project" value="InterPro"/>
</dbReference>
<dbReference type="GO" id="GO:0006412">
    <property type="term" value="P:translation"/>
    <property type="evidence" value="ECO:0007669"/>
    <property type="project" value="UniProtKB-UniRule"/>
</dbReference>
<dbReference type="Gene3D" id="2.20.28.120">
    <property type="entry name" value="Ribosomal protein L33"/>
    <property type="match status" value="1"/>
</dbReference>
<dbReference type="HAMAP" id="MF_00294">
    <property type="entry name" value="Ribosomal_bL33"/>
    <property type="match status" value="1"/>
</dbReference>
<dbReference type="InterPro" id="IPR001705">
    <property type="entry name" value="Ribosomal_bL33"/>
</dbReference>
<dbReference type="InterPro" id="IPR018264">
    <property type="entry name" value="Ribosomal_bL33_CS"/>
</dbReference>
<dbReference type="InterPro" id="IPR038584">
    <property type="entry name" value="Ribosomal_bL33_sf"/>
</dbReference>
<dbReference type="InterPro" id="IPR011332">
    <property type="entry name" value="Ribosomal_zn-bd"/>
</dbReference>
<dbReference type="NCBIfam" id="NF001764">
    <property type="entry name" value="PRK00504.1"/>
    <property type="match status" value="1"/>
</dbReference>
<dbReference type="NCBIfam" id="NF001860">
    <property type="entry name" value="PRK00595.1"/>
    <property type="match status" value="1"/>
</dbReference>
<dbReference type="NCBIfam" id="TIGR01023">
    <property type="entry name" value="rpmG_bact"/>
    <property type="match status" value="1"/>
</dbReference>
<dbReference type="PANTHER" id="PTHR43168">
    <property type="entry name" value="50S RIBOSOMAL PROTEIN L33, CHLOROPLASTIC"/>
    <property type="match status" value="1"/>
</dbReference>
<dbReference type="PANTHER" id="PTHR43168:SF2">
    <property type="entry name" value="LARGE RIBOSOMAL SUBUNIT PROTEIN BL33C"/>
    <property type="match status" value="1"/>
</dbReference>
<dbReference type="Pfam" id="PF00471">
    <property type="entry name" value="Ribosomal_L33"/>
    <property type="match status" value="1"/>
</dbReference>
<dbReference type="SUPFAM" id="SSF57829">
    <property type="entry name" value="Zn-binding ribosomal proteins"/>
    <property type="match status" value="1"/>
</dbReference>
<dbReference type="PROSITE" id="PS00582">
    <property type="entry name" value="RIBOSOMAL_L33"/>
    <property type="match status" value="1"/>
</dbReference>
<protein>
    <recommendedName>
        <fullName evidence="1">Large ribosomal subunit protein bL33D</fullName>
    </recommendedName>
    <alternativeName>
        <fullName>50S ribosomal protein L33 4</fullName>
    </alternativeName>
</protein>